<name>RL13_MESH2</name>
<organism>
    <name type="scientific">Mesomycoplasma hyopneumoniae (strain 232)</name>
    <name type="common">Mycoplasma hyopneumoniae</name>
    <dbReference type="NCBI Taxonomy" id="295358"/>
    <lineage>
        <taxon>Bacteria</taxon>
        <taxon>Bacillati</taxon>
        <taxon>Mycoplasmatota</taxon>
        <taxon>Mycoplasmoidales</taxon>
        <taxon>Metamycoplasmataceae</taxon>
        <taxon>Mesomycoplasma</taxon>
    </lineage>
</organism>
<sequence length="144" mass="16636">MRQTTFVKHQEVKQKWFVIDAESKILGRLAAFVASRLRGKHYPHFTPNVDMGDKIIIINAEKILLTAKKEDQKLYYNHSGYPGGLRVRTAREMRAKKPIALLERAIYGMIPHTKLGDKQRKNLYVYSGSEHPHLGQNPEKLEVK</sequence>
<proteinExistence type="inferred from homology"/>
<accession>Q5ZZN5</accession>
<comment type="function">
    <text evidence="1">This protein is one of the early assembly proteins of the 50S ribosomal subunit, although it is not seen to bind rRNA by itself. It is important during the early stages of 50S assembly.</text>
</comment>
<comment type="subunit">
    <text evidence="1">Part of the 50S ribosomal subunit.</text>
</comment>
<comment type="similarity">
    <text evidence="1">Belongs to the universal ribosomal protein uL13 family.</text>
</comment>
<protein>
    <recommendedName>
        <fullName evidence="1">Large ribosomal subunit protein uL13</fullName>
    </recommendedName>
    <alternativeName>
        <fullName evidence="2">50S ribosomal protein L13</fullName>
    </alternativeName>
</protein>
<dbReference type="EMBL" id="AE017332">
    <property type="protein sequence ID" value="AAV28025.1"/>
    <property type="molecule type" value="Genomic_DNA"/>
</dbReference>
<dbReference type="RefSeq" id="WP_011206503.1">
    <property type="nucleotide sequence ID" value="NC_006360.1"/>
</dbReference>
<dbReference type="SMR" id="Q5ZZN5"/>
<dbReference type="KEGG" id="mhy:mhp672"/>
<dbReference type="eggNOG" id="COG0102">
    <property type="taxonomic scope" value="Bacteria"/>
</dbReference>
<dbReference type="HOGENOM" id="CLU_082184_2_2_14"/>
<dbReference type="PhylomeDB" id="Q5ZZN5"/>
<dbReference type="Proteomes" id="UP000006822">
    <property type="component" value="Chromosome"/>
</dbReference>
<dbReference type="GO" id="GO:0022625">
    <property type="term" value="C:cytosolic large ribosomal subunit"/>
    <property type="evidence" value="ECO:0007669"/>
    <property type="project" value="TreeGrafter"/>
</dbReference>
<dbReference type="GO" id="GO:0003729">
    <property type="term" value="F:mRNA binding"/>
    <property type="evidence" value="ECO:0007669"/>
    <property type="project" value="TreeGrafter"/>
</dbReference>
<dbReference type="GO" id="GO:0003735">
    <property type="term" value="F:structural constituent of ribosome"/>
    <property type="evidence" value="ECO:0007669"/>
    <property type="project" value="InterPro"/>
</dbReference>
<dbReference type="GO" id="GO:0017148">
    <property type="term" value="P:negative regulation of translation"/>
    <property type="evidence" value="ECO:0007669"/>
    <property type="project" value="TreeGrafter"/>
</dbReference>
<dbReference type="GO" id="GO:0006412">
    <property type="term" value="P:translation"/>
    <property type="evidence" value="ECO:0007669"/>
    <property type="project" value="UniProtKB-UniRule"/>
</dbReference>
<dbReference type="CDD" id="cd00392">
    <property type="entry name" value="Ribosomal_L13"/>
    <property type="match status" value="1"/>
</dbReference>
<dbReference type="Gene3D" id="3.90.1180.10">
    <property type="entry name" value="Ribosomal protein L13"/>
    <property type="match status" value="1"/>
</dbReference>
<dbReference type="HAMAP" id="MF_01366">
    <property type="entry name" value="Ribosomal_uL13"/>
    <property type="match status" value="1"/>
</dbReference>
<dbReference type="InterPro" id="IPR005822">
    <property type="entry name" value="Ribosomal_uL13"/>
</dbReference>
<dbReference type="InterPro" id="IPR005823">
    <property type="entry name" value="Ribosomal_uL13_bac-type"/>
</dbReference>
<dbReference type="InterPro" id="IPR036899">
    <property type="entry name" value="Ribosomal_uL13_sf"/>
</dbReference>
<dbReference type="NCBIfam" id="TIGR01066">
    <property type="entry name" value="rplM_bact"/>
    <property type="match status" value="1"/>
</dbReference>
<dbReference type="PANTHER" id="PTHR11545:SF2">
    <property type="entry name" value="LARGE RIBOSOMAL SUBUNIT PROTEIN UL13M"/>
    <property type="match status" value="1"/>
</dbReference>
<dbReference type="PANTHER" id="PTHR11545">
    <property type="entry name" value="RIBOSOMAL PROTEIN L13"/>
    <property type="match status" value="1"/>
</dbReference>
<dbReference type="Pfam" id="PF00572">
    <property type="entry name" value="Ribosomal_L13"/>
    <property type="match status" value="1"/>
</dbReference>
<dbReference type="PIRSF" id="PIRSF002181">
    <property type="entry name" value="Ribosomal_L13"/>
    <property type="match status" value="1"/>
</dbReference>
<dbReference type="SUPFAM" id="SSF52161">
    <property type="entry name" value="Ribosomal protein L13"/>
    <property type="match status" value="1"/>
</dbReference>
<evidence type="ECO:0000255" key="1">
    <source>
        <dbReference type="HAMAP-Rule" id="MF_01366"/>
    </source>
</evidence>
<evidence type="ECO:0000305" key="2"/>
<reference key="1">
    <citation type="journal article" date="2004" name="J. Bacteriol.">
        <title>The genome sequence of Mycoplasma hyopneumoniae strain 232, the agent of swine mycoplasmosis.</title>
        <authorList>
            <person name="Minion F.C."/>
            <person name="Lefkowitz E.J."/>
            <person name="Madsen M.L."/>
            <person name="Cleary B.J."/>
            <person name="Swartzell S.M."/>
            <person name="Mahairas G.G."/>
        </authorList>
    </citation>
    <scope>NUCLEOTIDE SEQUENCE [LARGE SCALE GENOMIC DNA]</scope>
    <source>
        <strain>232</strain>
    </source>
</reference>
<feature type="chain" id="PRO_1000055410" description="Large ribosomal subunit protein uL13">
    <location>
        <begin position="1"/>
        <end position="144"/>
    </location>
</feature>
<gene>
    <name evidence="1" type="primary">rplM</name>
    <name type="ordered locus">mhp672</name>
</gene>
<keyword id="KW-0687">Ribonucleoprotein</keyword>
<keyword id="KW-0689">Ribosomal protein</keyword>